<feature type="chain" id="PRO_0000138199" description="CTP synthase">
    <location>
        <begin position="1"/>
        <end position="532"/>
    </location>
</feature>
<feature type="domain" description="Glutamine amidotransferase type-1" evidence="1">
    <location>
        <begin position="292"/>
        <end position="532"/>
    </location>
</feature>
<feature type="region of interest" description="Amidoligase domain" evidence="1">
    <location>
        <begin position="1"/>
        <end position="267"/>
    </location>
</feature>
<feature type="active site" description="Nucleophile; for glutamine hydrolysis" evidence="1">
    <location>
        <position position="381"/>
    </location>
</feature>
<feature type="active site" evidence="1">
    <location>
        <position position="506"/>
    </location>
</feature>
<feature type="active site" evidence="1">
    <location>
        <position position="508"/>
    </location>
</feature>
<feature type="binding site" evidence="1">
    <location>
        <position position="13"/>
    </location>
    <ligand>
        <name>CTP</name>
        <dbReference type="ChEBI" id="CHEBI:37563"/>
        <note>allosteric inhibitor</note>
    </ligand>
</feature>
<feature type="binding site" evidence="1">
    <location>
        <position position="13"/>
    </location>
    <ligand>
        <name>UTP</name>
        <dbReference type="ChEBI" id="CHEBI:46398"/>
    </ligand>
</feature>
<feature type="binding site" evidence="1">
    <location>
        <begin position="14"/>
        <end position="19"/>
    </location>
    <ligand>
        <name>ATP</name>
        <dbReference type="ChEBI" id="CHEBI:30616"/>
    </ligand>
</feature>
<feature type="binding site" evidence="1">
    <location>
        <position position="54"/>
    </location>
    <ligand>
        <name>L-glutamine</name>
        <dbReference type="ChEBI" id="CHEBI:58359"/>
    </ligand>
</feature>
<feature type="binding site" evidence="1">
    <location>
        <position position="71"/>
    </location>
    <ligand>
        <name>ATP</name>
        <dbReference type="ChEBI" id="CHEBI:30616"/>
    </ligand>
</feature>
<feature type="binding site" evidence="1">
    <location>
        <position position="71"/>
    </location>
    <ligand>
        <name>Mg(2+)</name>
        <dbReference type="ChEBI" id="CHEBI:18420"/>
    </ligand>
</feature>
<feature type="binding site" evidence="1">
    <location>
        <position position="141"/>
    </location>
    <ligand>
        <name>Mg(2+)</name>
        <dbReference type="ChEBI" id="CHEBI:18420"/>
    </ligand>
</feature>
<feature type="binding site" evidence="1">
    <location>
        <begin position="148"/>
        <end position="150"/>
    </location>
    <ligand>
        <name>CTP</name>
        <dbReference type="ChEBI" id="CHEBI:37563"/>
        <note>allosteric inhibitor</note>
    </ligand>
</feature>
<feature type="binding site" evidence="1">
    <location>
        <begin position="188"/>
        <end position="193"/>
    </location>
    <ligand>
        <name>CTP</name>
        <dbReference type="ChEBI" id="CHEBI:37563"/>
        <note>allosteric inhibitor</note>
    </ligand>
</feature>
<feature type="binding site" evidence="1">
    <location>
        <begin position="188"/>
        <end position="193"/>
    </location>
    <ligand>
        <name>UTP</name>
        <dbReference type="ChEBI" id="CHEBI:46398"/>
    </ligand>
</feature>
<feature type="binding site" evidence="1">
    <location>
        <position position="224"/>
    </location>
    <ligand>
        <name>CTP</name>
        <dbReference type="ChEBI" id="CHEBI:37563"/>
        <note>allosteric inhibitor</note>
    </ligand>
</feature>
<feature type="binding site" evidence="1">
    <location>
        <position position="224"/>
    </location>
    <ligand>
        <name>UTP</name>
        <dbReference type="ChEBI" id="CHEBI:46398"/>
    </ligand>
</feature>
<feature type="binding site" evidence="1">
    <location>
        <position position="354"/>
    </location>
    <ligand>
        <name>L-glutamine</name>
        <dbReference type="ChEBI" id="CHEBI:58359"/>
    </ligand>
</feature>
<feature type="binding site" evidence="1">
    <location>
        <begin position="382"/>
        <end position="385"/>
    </location>
    <ligand>
        <name>L-glutamine</name>
        <dbReference type="ChEBI" id="CHEBI:58359"/>
    </ligand>
</feature>
<feature type="binding site" evidence="1">
    <location>
        <position position="405"/>
    </location>
    <ligand>
        <name>L-glutamine</name>
        <dbReference type="ChEBI" id="CHEBI:58359"/>
    </ligand>
</feature>
<feature type="binding site" evidence="1">
    <location>
        <position position="461"/>
    </location>
    <ligand>
        <name>L-glutamine</name>
        <dbReference type="ChEBI" id="CHEBI:58359"/>
    </ligand>
</feature>
<name>PYRG_MYCCT</name>
<evidence type="ECO:0000255" key="1">
    <source>
        <dbReference type="HAMAP-Rule" id="MF_01227"/>
    </source>
</evidence>
<evidence type="ECO:0000305" key="2"/>
<comment type="function">
    <text evidence="1">Catalyzes the ATP-dependent amination of UTP to CTP with either L-glutamine or ammonia as the source of nitrogen. Regulates intracellular CTP levels through interactions with the four ribonucleotide triphosphates.</text>
</comment>
<comment type="catalytic activity">
    <reaction evidence="1">
        <text>UTP + L-glutamine + ATP + H2O = CTP + L-glutamate + ADP + phosphate + 2 H(+)</text>
        <dbReference type="Rhea" id="RHEA:26426"/>
        <dbReference type="ChEBI" id="CHEBI:15377"/>
        <dbReference type="ChEBI" id="CHEBI:15378"/>
        <dbReference type="ChEBI" id="CHEBI:29985"/>
        <dbReference type="ChEBI" id="CHEBI:30616"/>
        <dbReference type="ChEBI" id="CHEBI:37563"/>
        <dbReference type="ChEBI" id="CHEBI:43474"/>
        <dbReference type="ChEBI" id="CHEBI:46398"/>
        <dbReference type="ChEBI" id="CHEBI:58359"/>
        <dbReference type="ChEBI" id="CHEBI:456216"/>
        <dbReference type="EC" id="6.3.4.2"/>
    </reaction>
</comment>
<comment type="catalytic activity">
    <reaction evidence="1">
        <text>L-glutamine + H2O = L-glutamate + NH4(+)</text>
        <dbReference type="Rhea" id="RHEA:15889"/>
        <dbReference type="ChEBI" id="CHEBI:15377"/>
        <dbReference type="ChEBI" id="CHEBI:28938"/>
        <dbReference type="ChEBI" id="CHEBI:29985"/>
        <dbReference type="ChEBI" id="CHEBI:58359"/>
    </reaction>
</comment>
<comment type="catalytic activity">
    <reaction evidence="1">
        <text>UTP + NH4(+) + ATP = CTP + ADP + phosphate + 2 H(+)</text>
        <dbReference type="Rhea" id="RHEA:16597"/>
        <dbReference type="ChEBI" id="CHEBI:15378"/>
        <dbReference type="ChEBI" id="CHEBI:28938"/>
        <dbReference type="ChEBI" id="CHEBI:30616"/>
        <dbReference type="ChEBI" id="CHEBI:37563"/>
        <dbReference type="ChEBI" id="CHEBI:43474"/>
        <dbReference type="ChEBI" id="CHEBI:46398"/>
        <dbReference type="ChEBI" id="CHEBI:456216"/>
    </reaction>
</comment>
<comment type="activity regulation">
    <text evidence="1">Allosterically activated by GTP, when glutamine is the substrate; GTP has no effect on the reaction when ammonia is the substrate. The allosteric effector GTP functions by stabilizing the protein conformation that binds the tetrahedral intermediate(s) formed during glutamine hydrolysis. Inhibited by the product CTP, via allosteric rather than competitive inhibition.</text>
</comment>
<comment type="pathway">
    <text evidence="1">Pyrimidine metabolism; CTP biosynthesis via de novo pathway; CTP from UDP: step 2/2.</text>
</comment>
<comment type="subunit">
    <text evidence="1">Homotetramer.</text>
</comment>
<comment type="miscellaneous">
    <text evidence="1">CTPSs have evolved a hybrid strategy for distinguishing between UTP and CTP. The overlapping regions of the product feedback inhibitory and substrate sites recognize a common feature in both compounds, the triphosphate moiety. To differentiate isosteric substrate and product pyrimidine rings, an additional pocket far from the expected kinase/ligase catalytic site, specifically recognizes the cytosine and ribose portions of the product inhibitor.</text>
</comment>
<comment type="similarity">
    <text evidence="1">Belongs to the CTP synthase family.</text>
</comment>
<comment type="sequence caution" evidence="2">
    <conflict type="frameshift">
        <sequence resource="EMBL-CDS" id="CAA83703"/>
    </conflict>
</comment>
<organism>
    <name type="scientific">Mycoplasma capricolum subsp. capricolum (strain California kid / ATCC 27343 / NCTC 10154)</name>
    <dbReference type="NCBI Taxonomy" id="340047"/>
    <lineage>
        <taxon>Bacteria</taxon>
        <taxon>Bacillati</taxon>
        <taxon>Mycoplasmatota</taxon>
        <taxon>Mollicutes</taxon>
        <taxon>Mycoplasmataceae</taxon>
        <taxon>Mycoplasma</taxon>
    </lineage>
</organism>
<proteinExistence type="inferred from homology"/>
<gene>
    <name evidence="1" type="primary">pyrG</name>
    <name type="ordered locus">MCAP_0133</name>
</gene>
<reference key="1">
    <citation type="submission" date="2005-09" db="EMBL/GenBank/DDBJ databases">
        <authorList>
            <person name="Glass J.I."/>
            <person name="Lartigue C."/>
            <person name="Pfannkoch C."/>
            <person name="Baden-Tillson H."/>
            <person name="Smith H.O."/>
            <person name="Venter J.C."/>
            <person name="Roske K."/>
            <person name="Wise K.S."/>
            <person name="Calcutt M.J."/>
            <person name="Nelson W.C."/>
            <person name="Nierman W.C."/>
        </authorList>
    </citation>
    <scope>NUCLEOTIDE SEQUENCE [LARGE SCALE GENOMIC DNA]</scope>
    <source>
        <strain>California kid / ATCC 27343 / NCTC 10154</strain>
    </source>
</reference>
<reference key="2">
    <citation type="journal article" date="1995" name="Mol. Microbiol.">
        <title>Exploring the Mycoplasma capricolum genome: a minimal cell reveals its physiology.</title>
        <authorList>
            <person name="Bork P."/>
            <person name="Ouzounis C."/>
            <person name="Casari G."/>
            <person name="Schneider R."/>
            <person name="Sander C."/>
            <person name="Dolan M."/>
            <person name="Gilbert W."/>
            <person name="Gillevet P.M."/>
        </authorList>
    </citation>
    <scope>NUCLEOTIDE SEQUENCE [GENOMIC DNA] OF 28-532</scope>
</reference>
<keyword id="KW-0067">ATP-binding</keyword>
<keyword id="KW-0315">Glutamine amidotransferase</keyword>
<keyword id="KW-0436">Ligase</keyword>
<keyword id="KW-0460">Magnesium</keyword>
<keyword id="KW-0479">Metal-binding</keyword>
<keyword id="KW-0547">Nucleotide-binding</keyword>
<keyword id="KW-0665">Pyrimidine biosynthesis</keyword>
<dbReference type="EC" id="6.3.4.2" evidence="1"/>
<dbReference type="EMBL" id="CP000123">
    <property type="protein sequence ID" value="ABC01602.1"/>
    <property type="molecule type" value="Genomic_DNA"/>
</dbReference>
<dbReference type="EMBL" id="Z33022">
    <property type="protein sequence ID" value="CAA83703.1"/>
    <property type="status" value="ALT_FRAME"/>
    <property type="molecule type" value="Genomic_DNA"/>
</dbReference>
<dbReference type="RefSeq" id="WP_011387029.1">
    <property type="nucleotide sequence ID" value="NC_007633.1"/>
</dbReference>
<dbReference type="SMR" id="Q48965"/>
<dbReference type="MEROPS" id="C26.964"/>
<dbReference type="GeneID" id="23778914"/>
<dbReference type="KEGG" id="mcp:MCAP_0133"/>
<dbReference type="HOGENOM" id="CLU_011675_5_0_14"/>
<dbReference type="PhylomeDB" id="Q48965"/>
<dbReference type="UniPathway" id="UPA00159">
    <property type="reaction ID" value="UER00277"/>
</dbReference>
<dbReference type="Proteomes" id="UP000001928">
    <property type="component" value="Chromosome"/>
</dbReference>
<dbReference type="GO" id="GO:0005829">
    <property type="term" value="C:cytosol"/>
    <property type="evidence" value="ECO:0007669"/>
    <property type="project" value="TreeGrafter"/>
</dbReference>
<dbReference type="GO" id="GO:0005524">
    <property type="term" value="F:ATP binding"/>
    <property type="evidence" value="ECO:0007669"/>
    <property type="project" value="UniProtKB-KW"/>
</dbReference>
<dbReference type="GO" id="GO:0003883">
    <property type="term" value="F:CTP synthase activity"/>
    <property type="evidence" value="ECO:0007669"/>
    <property type="project" value="UniProtKB-UniRule"/>
</dbReference>
<dbReference type="GO" id="GO:0004359">
    <property type="term" value="F:glutaminase activity"/>
    <property type="evidence" value="ECO:0007669"/>
    <property type="project" value="RHEA"/>
</dbReference>
<dbReference type="GO" id="GO:0042802">
    <property type="term" value="F:identical protein binding"/>
    <property type="evidence" value="ECO:0007669"/>
    <property type="project" value="TreeGrafter"/>
</dbReference>
<dbReference type="GO" id="GO:0046872">
    <property type="term" value="F:metal ion binding"/>
    <property type="evidence" value="ECO:0007669"/>
    <property type="project" value="UniProtKB-KW"/>
</dbReference>
<dbReference type="GO" id="GO:0044210">
    <property type="term" value="P:'de novo' CTP biosynthetic process"/>
    <property type="evidence" value="ECO:0007669"/>
    <property type="project" value="UniProtKB-UniRule"/>
</dbReference>
<dbReference type="GO" id="GO:0019856">
    <property type="term" value="P:pyrimidine nucleobase biosynthetic process"/>
    <property type="evidence" value="ECO:0007669"/>
    <property type="project" value="TreeGrafter"/>
</dbReference>
<dbReference type="CDD" id="cd03113">
    <property type="entry name" value="CTPS_N"/>
    <property type="match status" value="1"/>
</dbReference>
<dbReference type="CDD" id="cd01746">
    <property type="entry name" value="GATase1_CTP_Synthase"/>
    <property type="match status" value="1"/>
</dbReference>
<dbReference type="FunFam" id="3.40.50.300:FF:000009">
    <property type="entry name" value="CTP synthase"/>
    <property type="match status" value="1"/>
</dbReference>
<dbReference type="FunFam" id="3.40.50.880:FF:000002">
    <property type="entry name" value="CTP synthase"/>
    <property type="match status" value="1"/>
</dbReference>
<dbReference type="Gene3D" id="3.40.50.880">
    <property type="match status" value="1"/>
</dbReference>
<dbReference type="Gene3D" id="3.40.50.300">
    <property type="entry name" value="P-loop containing nucleotide triphosphate hydrolases"/>
    <property type="match status" value="1"/>
</dbReference>
<dbReference type="HAMAP" id="MF_01227">
    <property type="entry name" value="PyrG"/>
    <property type="match status" value="1"/>
</dbReference>
<dbReference type="InterPro" id="IPR029062">
    <property type="entry name" value="Class_I_gatase-like"/>
</dbReference>
<dbReference type="InterPro" id="IPR004468">
    <property type="entry name" value="CTP_synthase"/>
</dbReference>
<dbReference type="InterPro" id="IPR017456">
    <property type="entry name" value="CTP_synthase_N"/>
</dbReference>
<dbReference type="InterPro" id="IPR017926">
    <property type="entry name" value="GATASE"/>
</dbReference>
<dbReference type="InterPro" id="IPR033828">
    <property type="entry name" value="GATase1_CTP_Synthase"/>
</dbReference>
<dbReference type="InterPro" id="IPR027417">
    <property type="entry name" value="P-loop_NTPase"/>
</dbReference>
<dbReference type="NCBIfam" id="NF003792">
    <property type="entry name" value="PRK05380.1"/>
    <property type="match status" value="1"/>
</dbReference>
<dbReference type="NCBIfam" id="TIGR00337">
    <property type="entry name" value="PyrG"/>
    <property type="match status" value="1"/>
</dbReference>
<dbReference type="PANTHER" id="PTHR11550">
    <property type="entry name" value="CTP SYNTHASE"/>
    <property type="match status" value="1"/>
</dbReference>
<dbReference type="PANTHER" id="PTHR11550:SF0">
    <property type="entry name" value="CTP SYNTHASE-RELATED"/>
    <property type="match status" value="1"/>
</dbReference>
<dbReference type="Pfam" id="PF06418">
    <property type="entry name" value="CTP_synth_N"/>
    <property type="match status" value="1"/>
</dbReference>
<dbReference type="Pfam" id="PF00117">
    <property type="entry name" value="GATase"/>
    <property type="match status" value="1"/>
</dbReference>
<dbReference type="SUPFAM" id="SSF52317">
    <property type="entry name" value="Class I glutamine amidotransferase-like"/>
    <property type="match status" value="1"/>
</dbReference>
<dbReference type="SUPFAM" id="SSF52540">
    <property type="entry name" value="P-loop containing nucleoside triphosphate hydrolases"/>
    <property type="match status" value="1"/>
</dbReference>
<dbReference type="PROSITE" id="PS51273">
    <property type="entry name" value="GATASE_TYPE_1"/>
    <property type="match status" value="1"/>
</dbReference>
<accession>Q48965</accession>
<accession>Q2SSY9</accession>
<sequence>MAKFIFVTGGVVSGLGKGITASSIGALLKASGLKVFMQKFDPYLNVDPGTMSPYQHGEVFVTKDGGETDLDLGHYERFIDEELTKLSSTTSGKIYLSVIKGERKGDTSGKTIQVVPHITDAIKNKVYQAAKQSQADVIISEIGGTVGDIESQPFIEAIRQIRLEQGKENVMFVHVVLLLWLAASKEYKTKPIQNSVKAMASLGIQPDVIVCRSDSSSPKDIKEKISLFCNVPITNIIDAIDQDSIYRVPLALAKQNLQDIIIEQLQLKANAIDLTSWKQFNKKIDSSSQEIEISFVGKYIELQDAYLSVLESLKIAGWEFNKKIKIRWIQAETLNESNYNEILKNSQGILVPGGFGKRGIEGMMLASRYARDNDIPYLGICLGMQIATISIARDLLNWTDADSTEFNKNTTHPIFDYIKGIDRDNIGGTLRLGTMVTKLEKDSLVSKLYNSDVALERHRHRYEFNNKYKKDLESVGLRFSGIYEEKNLVEVIEMPSLKFFVASQFHPEFTSRPNKPTPLFKGFIKAIIENNK</sequence>
<protein>
    <recommendedName>
        <fullName evidence="1">CTP synthase</fullName>
        <ecNumber evidence="1">6.3.4.2</ecNumber>
    </recommendedName>
    <alternativeName>
        <fullName evidence="1">Cytidine 5'-triphosphate synthase</fullName>
    </alternativeName>
    <alternativeName>
        <fullName evidence="1">Cytidine triphosphate synthetase</fullName>
        <shortName evidence="1">CTP synthetase</shortName>
        <shortName evidence="1">CTPS</shortName>
    </alternativeName>
    <alternativeName>
        <fullName evidence="1">UTP--ammonia ligase</fullName>
    </alternativeName>
</protein>